<name>HIS5_AROAE</name>
<evidence type="ECO:0000255" key="1">
    <source>
        <dbReference type="HAMAP-Rule" id="MF_00278"/>
    </source>
</evidence>
<comment type="function">
    <text evidence="1">IGPS catalyzes the conversion of PRFAR and glutamine to IGP, AICAR and glutamate. The HisH subunit catalyzes the hydrolysis of glutamine to glutamate and ammonia as part of the synthesis of IGP and AICAR. The resulting ammonia molecule is channeled to the active site of HisF.</text>
</comment>
<comment type="catalytic activity">
    <reaction evidence="1">
        <text>5-[(5-phospho-1-deoxy-D-ribulos-1-ylimino)methylamino]-1-(5-phospho-beta-D-ribosyl)imidazole-4-carboxamide + L-glutamine = D-erythro-1-(imidazol-4-yl)glycerol 3-phosphate + 5-amino-1-(5-phospho-beta-D-ribosyl)imidazole-4-carboxamide + L-glutamate + H(+)</text>
        <dbReference type="Rhea" id="RHEA:24793"/>
        <dbReference type="ChEBI" id="CHEBI:15378"/>
        <dbReference type="ChEBI" id="CHEBI:29985"/>
        <dbReference type="ChEBI" id="CHEBI:58278"/>
        <dbReference type="ChEBI" id="CHEBI:58359"/>
        <dbReference type="ChEBI" id="CHEBI:58475"/>
        <dbReference type="ChEBI" id="CHEBI:58525"/>
        <dbReference type="EC" id="4.3.2.10"/>
    </reaction>
</comment>
<comment type="catalytic activity">
    <reaction evidence="1">
        <text>L-glutamine + H2O = L-glutamate + NH4(+)</text>
        <dbReference type="Rhea" id="RHEA:15889"/>
        <dbReference type="ChEBI" id="CHEBI:15377"/>
        <dbReference type="ChEBI" id="CHEBI:28938"/>
        <dbReference type="ChEBI" id="CHEBI:29985"/>
        <dbReference type="ChEBI" id="CHEBI:58359"/>
        <dbReference type="EC" id="3.5.1.2"/>
    </reaction>
</comment>
<comment type="pathway">
    <text evidence="1">Amino-acid biosynthesis; L-histidine biosynthesis; L-histidine from 5-phospho-alpha-D-ribose 1-diphosphate: step 5/9.</text>
</comment>
<comment type="subunit">
    <text evidence="1">Heterodimer of HisH and HisF.</text>
</comment>
<comment type="subcellular location">
    <subcellularLocation>
        <location evidence="1">Cytoplasm</location>
    </subcellularLocation>
</comment>
<accession>Q5P793</accession>
<sequence>MSDVAIIDYGMGNLRSVAKAIEHVAPGKRVAVTSDPAVVAAAARVVFPGQGAMPDCMRELDLRGLREVVKTAAASKPFLGICIGQQMLFEHSEEGNVPGLGILPGGVVRFPDAKMVAADGSRLKVPHMGWNEVCQRKPHPMWEGIPDNERFYFVHSYFVAPADAALVAAESDYGTRFTSAVARANIFAVQFHPEKSAQAGLKMLANFISWAP</sequence>
<gene>
    <name evidence="1" type="primary">hisH</name>
    <name type="ordered locus">AZOSEA06950</name>
    <name type="ORF">ebA1295</name>
</gene>
<feature type="chain" id="PRO_0000231702" description="Imidazole glycerol phosphate synthase subunit HisH">
    <location>
        <begin position="1"/>
        <end position="212"/>
    </location>
</feature>
<feature type="domain" description="Glutamine amidotransferase type-1" evidence="1">
    <location>
        <begin position="3"/>
        <end position="212"/>
    </location>
</feature>
<feature type="active site" description="Nucleophile" evidence="1">
    <location>
        <position position="82"/>
    </location>
</feature>
<feature type="active site" evidence="1">
    <location>
        <position position="192"/>
    </location>
</feature>
<feature type="active site" evidence="1">
    <location>
        <position position="194"/>
    </location>
</feature>
<dbReference type="EC" id="4.3.2.10" evidence="1"/>
<dbReference type="EC" id="3.5.1.2" evidence="1"/>
<dbReference type="EMBL" id="CR555306">
    <property type="protein sequence ID" value="CAI06818.1"/>
    <property type="molecule type" value="Genomic_DNA"/>
</dbReference>
<dbReference type="RefSeq" id="WP_011236546.1">
    <property type="nucleotide sequence ID" value="NC_006513.1"/>
</dbReference>
<dbReference type="SMR" id="Q5P793"/>
<dbReference type="STRING" id="76114.ebA1295"/>
<dbReference type="KEGG" id="eba:ebA1295"/>
<dbReference type="eggNOG" id="COG0118">
    <property type="taxonomic scope" value="Bacteria"/>
</dbReference>
<dbReference type="HOGENOM" id="CLU_071837_2_0_4"/>
<dbReference type="OrthoDB" id="9807137at2"/>
<dbReference type="UniPathway" id="UPA00031">
    <property type="reaction ID" value="UER00010"/>
</dbReference>
<dbReference type="Proteomes" id="UP000006552">
    <property type="component" value="Chromosome"/>
</dbReference>
<dbReference type="GO" id="GO:0005737">
    <property type="term" value="C:cytoplasm"/>
    <property type="evidence" value="ECO:0007669"/>
    <property type="project" value="UniProtKB-SubCell"/>
</dbReference>
<dbReference type="GO" id="GO:0004359">
    <property type="term" value="F:glutaminase activity"/>
    <property type="evidence" value="ECO:0007669"/>
    <property type="project" value="UniProtKB-EC"/>
</dbReference>
<dbReference type="GO" id="GO:0000107">
    <property type="term" value="F:imidazoleglycerol-phosphate synthase activity"/>
    <property type="evidence" value="ECO:0007669"/>
    <property type="project" value="UniProtKB-UniRule"/>
</dbReference>
<dbReference type="GO" id="GO:0016829">
    <property type="term" value="F:lyase activity"/>
    <property type="evidence" value="ECO:0007669"/>
    <property type="project" value="UniProtKB-KW"/>
</dbReference>
<dbReference type="GO" id="GO:0000105">
    <property type="term" value="P:L-histidine biosynthetic process"/>
    <property type="evidence" value="ECO:0007669"/>
    <property type="project" value="UniProtKB-UniRule"/>
</dbReference>
<dbReference type="CDD" id="cd01748">
    <property type="entry name" value="GATase1_IGP_Synthase"/>
    <property type="match status" value="1"/>
</dbReference>
<dbReference type="Gene3D" id="3.40.50.880">
    <property type="match status" value="1"/>
</dbReference>
<dbReference type="HAMAP" id="MF_00278">
    <property type="entry name" value="HisH"/>
    <property type="match status" value="1"/>
</dbReference>
<dbReference type="InterPro" id="IPR029062">
    <property type="entry name" value="Class_I_gatase-like"/>
</dbReference>
<dbReference type="InterPro" id="IPR017926">
    <property type="entry name" value="GATASE"/>
</dbReference>
<dbReference type="InterPro" id="IPR010139">
    <property type="entry name" value="Imidazole-glycPsynth_HisH"/>
</dbReference>
<dbReference type="NCBIfam" id="TIGR01855">
    <property type="entry name" value="IMP_synth_hisH"/>
    <property type="match status" value="1"/>
</dbReference>
<dbReference type="PANTHER" id="PTHR42701">
    <property type="entry name" value="IMIDAZOLE GLYCEROL PHOSPHATE SYNTHASE SUBUNIT HISH"/>
    <property type="match status" value="1"/>
</dbReference>
<dbReference type="PANTHER" id="PTHR42701:SF2">
    <property type="entry name" value="IMIDAZOLE GLYCEROL PHOSPHATE SYNTHASE SUBUNIT HISH 1"/>
    <property type="match status" value="1"/>
</dbReference>
<dbReference type="Pfam" id="PF00117">
    <property type="entry name" value="GATase"/>
    <property type="match status" value="1"/>
</dbReference>
<dbReference type="PIRSF" id="PIRSF000495">
    <property type="entry name" value="Amidotransf_hisH"/>
    <property type="match status" value="1"/>
</dbReference>
<dbReference type="SUPFAM" id="SSF52317">
    <property type="entry name" value="Class I glutamine amidotransferase-like"/>
    <property type="match status" value="1"/>
</dbReference>
<dbReference type="PROSITE" id="PS51273">
    <property type="entry name" value="GATASE_TYPE_1"/>
    <property type="match status" value="1"/>
</dbReference>
<proteinExistence type="inferred from homology"/>
<reference key="1">
    <citation type="journal article" date="2005" name="Arch. Microbiol.">
        <title>The genome sequence of an anaerobic aromatic-degrading denitrifying bacterium, strain EbN1.</title>
        <authorList>
            <person name="Rabus R."/>
            <person name="Kube M."/>
            <person name="Heider J."/>
            <person name="Beck A."/>
            <person name="Heitmann K."/>
            <person name="Widdel F."/>
            <person name="Reinhardt R."/>
        </authorList>
    </citation>
    <scope>NUCLEOTIDE SEQUENCE [LARGE SCALE GENOMIC DNA]</scope>
    <source>
        <strain>DSM 19018 / LMG 30748 / EbN1</strain>
    </source>
</reference>
<organism>
    <name type="scientific">Aromatoleum aromaticum (strain DSM 19018 / LMG 30748 / EbN1)</name>
    <name type="common">Azoarcus sp. (strain EbN1)</name>
    <dbReference type="NCBI Taxonomy" id="76114"/>
    <lineage>
        <taxon>Bacteria</taxon>
        <taxon>Pseudomonadati</taxon>
        <taxon>Pseudomonadota</taxon>
        <taxon>Betaproteobacteria</taxon>
        <taxon>Rhodocyclales</taxon>
        <taxon>Rhodocyclaceae</taxon>
        <taxon>Aromatoleum</taxon>
    </lineage>
</organism>
<keyword id="KW-0028">Amino-acid biosynthesis</keyword>
<keyword id="KW-0963">Cytoplasm</keyword>
<keyword id="KW-0315">Glutamine amidotransferase</keyword>
<keyword id="KW-0368">Histidine biosynthesis</keyword>
<keyword id="KW-0378">Hydrolase</keyword>
<keyword id="KW-0456">Lyase</keyword>
<keyword id="KW-1185">Reference proteome</keyword>
<protein>
    <recommendedName>
        <fullName evidence="1">Imidazole glycerol phosphate synthase subunit HisH</fullName>
        <ecNumber evidence="1">4.3.2.10</ecNumber>
    </recommendedName>
    <alternativeName>
        <fullName evidence="1">IGP synthase glutaminase subunit</fullName>
        <ecNumber evidence="1">3.5.1.2</ecNumber>
    </alternativeName>
    <alternativeName>
        <fullName evidence="1">IGP synthase subunit HisH</fullName>
    </alternativeName>
    <alternativeName>
        <fullName evidence="1">ImGP synthase subunit HisH</fullName>
        <shortName evidence="1">IGPS subunit HisH</shortName>
    </alternativeName>
</protein>